<accession>A1AU17</accession>
<evidence type="ECO:0000255" key="1">
    <source>
        <dbReference type="HAMAP-Rule" id="MF_00451"/>
    </source>
</evidence>
<gene>
    <name evidence="1" type="primary">ndk</name>
    <name type="ordered locus">Ppro_3244</name>
</gene>
<feature type="chain" id="PRO_1000026267" description="Nucleoside diphosphate kinase">
    <location>
        <begin position="1"/>
        <end position="137"/>
    </location>
</feature>
<feature type="active site" description="Pros-phosphohistidine intermediate" evidence="1">
    <location>
        <position position="115"/>
    </location>
</feature>
<feature type="binding site" evidence="1">
    <location>
        <position position="9"/>
    </location>
    <ligand>
        <name>ATP</name>
        <dbReference type="ChEBI" id="CHEBI:30616"/>
    </ligand>
</feature>
<feature type="binding site" evidence="1">
    <location>
        <position position="57"/>
    </location>
    <ligand>
        <name>ATP</name>
        <dbReference type="ChEBI" id="CHEBI:30616"/>
    </ligand>
</feature>
<feature type="binding site" evidence="1">
    <location>
        <position position="85"/>
    </location>
    <ligand>
        <name>ATP</name>
        <dbReference type="ChEBI" id="CHEBI:30616"/>
    </ligand>
</feature>
<feature type="binding site" evidence="1">
    <location>
        <position position="91"/>
    </location>
    <ligand>
        <name>ATP</name>
        <dbReference type="ChEBI" id="CHEBI:30616"/>
    </ligand>
</feature>
<feature type="binding site" evidence="1">
    <location>
        <position position="102"/>
    </location>
    <ligand>
        <name>ATP</name>
        <dbReference type="ChEBI" id="CHEBI:30616"/>
    </ligand>
</feature>
<feature type="binding site" evidence="1">
    <location>
        <position position="112"/>
    </location>
    <ligand>
        <name>ATP</name>
        <dbReference type="ChEBI" id="CHEBI:30616"/>
    </ligand>
</feature>
<name>NDK_PELPD</name>
<sequence>MERTFAIIKPDAVERRLAGTVIDRIEANGFTIVGMKKIKLSKEQAGGFYCVHRERPFFGELCDFMSRSPVIVLCLEKENAIADWRKLMGATNPANAEPGTIRRDFALSLSENSAHGSDAPETAAFEIAYFFNALELV</sequence>
<proteinExistence type="inferred from homology"/>
<reference key="1">
    <citation type="submission" date="2006-10" db="EMBL/GenBank/DDBJ databases">
        <title>Complete sequence of chromosome of Pelobacter propionicus DSM 2379.</title>
        <authorList>
            <consortium name="US DOE Joint Genome Institute"/>
            <person name="Copeland A."/>
            <person name="Lucas S."/>
            <person name="Lapidus A."/>
            <person name="Barry K."/>
            <person name="Detter J.C."/>
            <person name="Glavina del Rio T."/>
            <person name="Hammon N."/>
            <person name="Israni S."/>
            <person name="Dalin E."/>
            <person name="Tice H."/>
            <person name="Pitluck S."/>
            <person name="Saunders E."/>
            <person name="Brettin T."/>
            <person name="Bruce D."/>
            <person name="Han C."/>
            <person name="Tapia R."/>
            <person name="Schmutz J."/>
            <person name="Larimer F."/>
            <person name="Land M."/>
            <person name="Hauser L."/>
            <person name="Kyrpides N."/>
            <person name="Kim E."/>
            <person name="Lovley D."/>
            <person name="Richardson P."/>
        </authorList>
    </citation>
    <scope>NUCLEOTIDE SEQUENCE [LARGE SCALE GENOMIC DNA]</scope>
    <source>
        <strain>DSM 2379 / NBRC 103807 / OttBd1</strain>
    </source>
</reference>
<comment type="function">
    <text evidence="1">Major role in the synthesis of nucleoside triphosphates other than ATP. The ATP gamma phosphate is transferred to the NDP beta phosphate via a ping-pong mechanism, using a phosphorylated active-site intermediate.</text>
</comment>
<comment type="catalytic activity">
    <reaction evidence="1">
        <text>a 2'-deoxyribonucleoside 5'-diphosphate + ATP = a 2'-deoxyribonucleoside 5'-triphosphate + ADP</text>
        <dbReference type="Rhea" id="RHEA:44640"/>
        <dbReference type="ChEBI" id="CHEBI:30616"/>
        <dbReference type="ChEBI" id="CHEBI:61560"/>
        <dbReference type="ChEBI" id="CHEBI:73316"/>
        <dbReference type="ChEBI" id="CHEBI:456216"/>
        <dbReference type="EC" id="2.7.4.6"/>
    </reaction>
</comment>
<comment type="catalytic activity">
    <reaction evidence="1">
        <text>a ribonucleoside 5'-diphosphate + ATP = a ribonucleoside 5'-triphosphate + ADP</text>
        <dbReference type="Rhea" id="RHEA:18113"/>
        <dbReference type="ChEBI" id="CHEBI:30616"/>
        <dbReference type="ChEBI" id="CHEBI:57930"/>
        <dbReference type="ChEBI" id="CHEBI:61557"/>
        <dbReference type="ChEBI" id="CHEBI:456216"/>
        <dbReference type="EC" id="2.7.4.6"/>
    </reaction>
</comment>
<comment type="cofactor">
    <cofactor evidence="1">
        <name>Mg(2+)</name>
        <dbReference type="ChEBI" id="CHEBI:18420"/>
    </cofactor>
</comment>
<comment type="subunit">
    <text evidence="1">Homotetramer.</text>
</comment>
<comment type="subcellular location">
    <subcellularLocation>
        <location evidence="1">Cytoplasm</location>
    </subcellularLocation>
</comment>
<comment type="similarity">
    <text evidence="1">Belongs to the NDK family.</text>
</comment>
<dbReference type="EC" id="2.7.4.6" evidence="1"/>
<dbReference type="EMBL" id="CP000482">
    <property type="protein sequence ID" value="ABL00838.1"/>
    <property type="molecule type" value="Genomic_DNA"/>
</dbReference>
<dbReference type="RefSeq" id="WP_011737055.1">
    <property type="nucleotide sequence ID" value="NC_008609.1"/>
</dbReference>
<dbReference type="SMR" id="A1AU17"/>
<dbReference type="STRING" id="338966.Ppro_3244"/>
<dbReference type="KEGG" id="ppd:Ppro_3244"/>
<dbReference type="eggNOG" id="COG0105">
    <property type="taxonomic scope" value="Bacteria"/>
</dbReference>
<dbReference type="HOGENOM" id="CLU_060216_8_1_7"/>
<dbReference type="OrthoDB" id="9801161at2"/>
<dbReference type="Proteomes" id="UP000006732">
    <property type="component" value="Chromosome"/>
</dbReference>
<dbReference type="GO" id="GO:0005737">
    <property type="term" value="C:cytoplasm"/>
    <property type="evidence" value="ECO:0007669"/>
    <property type="project" value="UniProtKB-SubCell"/>
</dbReference>
<dbReference type="GO" id="GO:0005524">
    <property type="term" value="F:ATP binding"/>
    <property type="evidence" value="ECO:0007669"/>
    <property type="project" value="UniProtKB-UniRule"/>
</dbReference>
<dbReference type="GO" id="GO:0046872">
    <property type="term" value="F:metal ion binding"/>
    <property type="evidence" value="ECO:0007669"/>
    <property type="project" value="UniProtKB-KW"/>
</dbReference>
<dbReference type="GO" id="GO:0004550">
    <property type="term" value="F:nucleoside diphosphate kinase activity"/>
    <property type="evidence" value="ECO:0007669"/>
    <property type="project" value="UniProtKB-UniRule"/>
</dbReference>
<dbReference type="GO" id="GO:0006241">
    <property type="term" value="P:CTP biosynthetic process"/>
    <property type="evidence" value="ECO:0007669"/>
    <property type="project" value="UniProtKB-UniRule"/>
</dbReference>
<dbReference type="GO" id="GO:0006183">
    <property type="term" value="P:GTP biosynthetic process"/>
    <property type="evidence" value="ECO:0007669"/>
    <property type="project" value="UniProtKB-UniRule"/>
</dbReference>
<dbReference type="GO" id="GO:0006228">
    <property type="term" value="P:UTP biosynthetic process"/>
    <property type="evidence" value="ECO:0007669"/>
    <property type="project" value="UniProtKB-UniRule"/>
</dbReference>
<dbReference type="CDD" id="cd04413">
    <property type="entry name" value="NDPk_I"/>
    <property type="match status" value="1"/>
</dbReference>
<dbReference type="FunFam" id="3.30.70.141:FF:000003">
    <property type="entry name" value="Nucleoside diphosphate kinase"/>
    <property type="match status" value="1"/>
</dbReference>
<dbReference type="Gene3D" id="3.30.70.141">
    <property type="entry name" value="Nucleoside diphosphate kinase-like domain"/>
    <property type="match status" value="1"/>
</dbReference>
<dbReference type="HAMAP" id="MF_00451">
    <property type="entry name" value="NDP_kinase"/>
    <property type="match status" value="1"/>
</dbReference>
<dbReference type="InterPro" id="IPR034907">
    <property type="entry name" value="NDK-like_dom"/>
</dbReference>
<dbReference type="InterPro" id="IPR036850">
    <property type="entry name" value="NDK-like_dom_sf"/>
</dbReference>
<dbReference type="InterPro" id="IPR001564">
    <property type="entry name" value="Nucleoside_diP_kinase"/>
</dbReference>
<dbReference type="InterPro" id="IPR023005">
    <property type="entry name" value="Nucleoside_diP_kinase_AS"/>
</dbReference>
<dbReference type="NCBIfam" id="NF001908">
    <property type="entry name" value="PRK00668.1"/>
    <property type="match status" value="1"/>
</dbReference>
<dbReference type="PANTHER" id="PTHR46161">
    <property type="entry name" value="NUCLEOSIDE DIPHOSPHATE KINASE"/>
    <property type="match status" value="1"/>
</dbReference>
<dbReference type="PANTHER" id="PTHR46161:SF3">
    <property type="entry name" value="NUCLEOSIDE DIPHOSPHATE KINASE DDB_G0292928-RELATED"/>
    <property type="match status" value="1"/>
</dbReference>
<dbReference type="Pfam" id="PF00334">
    <property type="entry name" value="NDK"/>
    <property type="match status" value="1"/>
</dbReference>
<dbReference type="PRINTS" id="PR01243">
    <property type="entry name" value="NUCDPKINASE"/>
</dbReference>
<dbReference type="SMART" id="SM00562">
    <property type="entry name" value="NDK"/>
    <property type="match status" value="1"/>
</dbReference>
<dbReference type="SUPFAM" id="SSF54919">
    <property type="entry name" value="Nucleoside diphosphate kinase, NDK"/>
    <property type="match status" value="1"/>
</dbReference>
<dbReference type="PROSITE" id="PS00469">
    <property type="entry name" value="NDPK"/>
    <property type="match status" value="1"/>
</dbReference>
<dbReference type="PROSITE" id="PS51374">
    <property type="entry name" value="NDPK_LIKE"/>
    <property type="match status" value="1"/>
</dbReference>
<protein>
    <recommendedName>
        <fullName evidence="1">Nucleoside diphosphate kinase</fullName>
        <shortName evidence="1">NDK</shortName>
        <shortName evidence="1">NDP kinase</shortName>
        <ecNumber evidence="1">2.7.4.6</ecNumber>
    </recommendedName>
    <alternativeName>
        <fullName evidence="1">Nucleoside-2-P kinase</fullName>
    </alternativeName>
</protein>
<organism>
    <name type="scientific">Pelobacter propionicus (strain DSM 2379 / NBRC 103807 / OttBd1)</name>
    <dbReference type="NCBI Taxonomy" id="338966"/>
    <lineage>
        <taxon>Bacteria</taxon>
        <taxon>Pseudomonadati</taxon>
        <taxon>Thermodesulfobacteriota</taxon>
        <taxon>Desulfuromonadia</taxon>
        <taxon>Desulfuromonadales</taxon>
        <taxon>Desulfuromonadaceae</taxon>
        <taxon>Pelobacter</taxon>
    </lineage>
</organism>
<keyword id="KW-0067">ATP-binding</keyword>
<keyword id="KW-0963">Cytoplasm</keyword>
<keyword id="KW-0418">Kinase</keyword>
<keyword id="KW-0460">Magnesium</keyword>
<keyword id="KW-0479">Metal-binding</keyword>
<keyword id="KW-0546">Nucleotide metabolism</keyword>
<keyword id="KW-0547">Nucleotide-binding</keyword>
<keyword id="KW-0597">Phosphoprotein</keyword>
<keyword id="KW-1185">Reference proteome</keyword>
<keyword id="KW-0808">Transferase</keyword>